<evidence type="ECO:0000250" key="1"/>
<evidence type="ECO:0000255" key="2">
    <source>
        <dbReference type="PROSITE-ProRule" id="PRU00159"/>
    </source>
</evidence>
<evidence type="ECO:0000255" key="3">
    <source>
        <dbReference type="PROSITE-ProRule" id="PRU10027"/>
    </source>
</evidence>
<evidence type="ECO:0000305" key="4"/>
<dbReference type="EC" id="2.7.11.24"/>
<dbReference type="EMBL" id="AF414186">
    <property type="protein sequence ID" value="AAN03694.1"/>
    <property type="molecule type" value="Genomic_DNA"/>
</dbReference>
<dbReference type="EMBL" id="AE017345">
    <property type="protein sequence ID" value="AAW43453.1"/>
    <property type="molecule type" value="Genomic_DNA"/>
</dbReference>
<dbReference type="RefSeq" id="XP_570760.1">
    <property type="nucleotide sequence ID" value="XM_570760.1"/>
</dbReference>
<dbReference type="SMR" id="P0CP66"/>
<dbReference type="FunCoup" id="P0CP66">
    <property type="interactions" value="567"/>
</dbReference>
<dbReference type="STRING" id="214684.P0CP66"/>
<dbReference type="PaxDb" id="214684-P0CP66"/>
<dbReference type="EnsemblFungi" id="AAW43453">
    <property type="protein sequence ID" value="AAW43453"/>
    <property type="gene ID" value="CNE00520"/>
</dbReference>
<dbReference type="GeneID" id="3257550"/>
<dbReference type="KEGG" id="cne:CNE00520"/>
<dbReference type="VEuPathDB" id="FungiDB:CNE00520"/>
<dbReference type="eggNOG" id="KOG0660">
    <property type="taxonomic scope" value="Eukaryota"/>
</dbReference>
<dbReference type="HOGENOM" id="CLU_000288_181_1_1"/>
<dbReference type="InParanoid" id="P0CP66"/>
<dbReference type="OMA" id="SFFDFDY"/>
<dbReference type="OrthoDB" id="192887at2759"/>
<dbReference type="Proteomes" id="UP000002149">
    <property type="component" value="Chromosome 5"/>
</dbReference>
<dbReference type="GO" id="GO:0005737">
    <property type="term" value="C:cytoplasm"/>
    <property type="evidence" value="ECO:0000318"/>
    <property type="project" value="GO_Central"/>
</dbReference>
<dbReference type="GO" id="GO:0005634">
    <property type="term" value="C:nucleus"/>
    <property type="evidence" value="ECO:0000318"/>
    <property type="project" value="GO_Central"/>
</dbReference>
<dbReference type="GO" id="GO:0005524">
    <property type="term" value="F:ATP binding"/>
    <property type="evidence" value="ECO:0007669"/>
    <property type="project" value="UniProtKB-KW"/>
</dbReference>
<dbReference type="GO" id="GO:0004707">
    <property type="term" value="F:MAP kinase activity"/>
    <property type="evidence" value="ECO:0007669"/>
    <property type="project" value="UniProtKB-EC"/>
</dbReference>
<dbReference type="GO" id="GO:0106310">
    <property type="term" value="F:protein serine kinase activity"/>
    <property type="evidence" value="ECO:0007669"/>
    <property type="project" value="RHEA"/>
</dbReference>
<dbReference type="GO" id="GO:0004674">
    <property type="term" value="F:protein serine/threonine kinase activity"/>
    <property type="evidence" value="ECO:0000318"/>
    <property type="project" value="GO_Central"/>
</dbReference>
<dbReference type="GO" id="GO:0035556">
    <property type="term" value="P:intracellular signal transduction"/>
    <property type="evidence" value="ECO:0000318"/>
    <property type="project" value="GO_Central"/>
</dbReference>
<dbReference type="GO" id="GO:0000750">
    <property type="term" value="P:pheromone-dependent signal transduction involved in conjugation with cellular fusion"/>
    <property type="evidence" value="ECO:0000318"/>
    <property type="project" value="GO_Central"/>
</dbReference>
<dbReference type="CDD" id="cd07849">
    <property type="entry name" value="STKc_ERK1_2_like"/>
    <property type="match status" value="1"/>
</dbReference>
<dbReference type="FunFam" id="1.10.510.10:FF:000040">
    <property type="entry name" value="Mitogen-activated protein kinase"/>
    <property type="match status" value="1"/>
</dbReference>
<dbReference type="FunFam" id="3.30.200.20:FF:000073">
    <property type="entry name" value="Mitogen-activated protein kinase"/>
    <property type="match status" value="1"/>
</dbReference>
<dbReference type="Gene3D" id="3.30.200.20">
    <property type="entry name" value="Phosphorylase Kinase, domain 1"/>
    <property type="match status" value="1"/>
</dbReference>
<dbReference type="Gene3D" id="1.10.510.10">
    <property type="entry name" value="Transferase(Phosphotransferase) domain 1"/>
    <property type="match status" value="1"/>
</dbReference>
<dbReference type="InterPro" id="IPR011009">
    <property type="entry name" value="Kinase-like_dom_sf"/>
</dbReference>
<dbReference type="InterPro" id="IPR050117">
    <property type="entry name" value="MAP_kinase"/>
</dbReference>
<dbReference type="InterPro" id="IPR003527">
    <property type="entry name" value="MAP_kinase_CS"/>
</dbReference>
<dbReference type="InterPro" id="IPR000719">
    <property type="entry name" value="Prot_kinase_dom"/>
</dbReference>
<dbReference type="InterPro" id="IPR017441">
    <property type="entry name" value="Protein_kinase_ATP_BS"/>
</dbReference>
<dbReference type="InterPro" id="IPR008271">
    <property type="entry name" value="Ser/Thr_kinase_AS"/>
</dbReference>
<dbReference type="PANTHER" id="PTHR24055">
    <property type="entry name" value="MITOGEN-ACTIVATED PROTEIN KINASE"/>
    <property type="match status" value="1"/>
</dbReference>
<dbReference type="Pfam" id="PF00069">
    <property type="entry name" value="Pkinase"/>
    <property type="match status" value="1"/>
</dbReference>
<dbReference type="SMART" id="SM00220">
    <property type="entry name" value="S_TKc"/>
    <property type="match status" value="1"/>
</dbReference>
<dbReference type="SUPFAM" id="SSF56112">
    <property type="entry name" value="Protein kinase-like (PK-like)"/>
    <property type="match status" value="1"/>
</dbReference>
<dbReference type="PROSITE" id="PS01351">
    <property type="entry name" value="MAPK"/>
    <property type="match status" value="1"/>
</dbReference>
<dbReference type="PROSITE" id="PS00107">
    <property type="entry name" value="PROTEIN_KINASE_ATP"/>
    <property type="match status" value="1"/>
</dbReference>
<dbReference type="PROSITE" id="PS50011">
    <property type="entry name" value="PROTEIN_KINASE_DOM"/>
    <property type="match status" value="1"/>
</dbReference>
<dbReference type="PROSITE" id="PS00108">
    <property type="entry name" value="PROTEIN_KINASE_ST"/>
    <property type="match status" value="1"/>
</dbReference>
<protein>
    <recommendedName>
        <fullName>Mitogen-activated protein kinase CPK1</fullName>
        <ecNumber>2.7.11.24</ecNumber>
    </recommendedName>
    <alternativeName>
        <fullName>Stress-activated protein kinase CPK1</fullName>
    </alternativeName>
</protein>
<keyword id="KW-0067">ATP-binding</keyword>
<keyword id="KW-0418">Kinase</keyword>
<keyword id="KW-0547">Nucleotide-binding</keyword>
<keyword id="KW-0597">Phosphoprotein</keyword>
<keyword id="KW-1185">Reference proteome</keyword>
<keyword id="KW-0723">Serine/threonine-protein kinase</keyword>
<keyword id="KW-0808">Transferase</keyword>
<name>CPK1_CRYNJ</name>
<accession>P0CP66</accession>
<accession>Q55SZ2</accession>
<accession>Q5KHC4</accession>
<accession>Q8NK05</accession>
<feature type="chain" id="PRO_0000186324" description="Mitogen-activated protein kinase CPK1">
    <location>
        <begin position="1"/>
        <end position="366"/>
    </location>
</feature>
<feature type="domain" description="Protein kinase" evidence="2">
    <location>
        <begin position="17"/>
        <end position="302"/>
    </location>
</feature>
<feature type="short sequence motif" description="TXY">
    <location>
        <begin position="181"/>
        <end position="183"/>
    </location>
</feature>
<feature type="active site" description="Proton acceptor" evidence="2 3">
    <location>
        <position position="140"/>
    </location>
</feature>
<feature type="binding site" evidence="2">
    <location>
        <begin position="22"/>
        <end position="30"/>
    </location>
    <ligand>
        <name>ATP</name>
        <dbReference type="ChEBI" id="CHEBI:30616"/>
    </ligand>
</feature>
<feature type="binding site" evidence="2">
    <location>
        <position position="45"/>
    </location>
    <ligand>
        <name>ATP</name>
        <dbReference type="ChEBI" id="CHEBI:30616"/>
    </ligand>
</feature>
<feature type="modified residue" description="Phosphothreonine" evidence="1">
    <location>
        <position position="181"/>
    </location>
</feature>
<feature type="modified residue" description="Phosphotyrosine" evidence="1">
    <location>
        <position position="183"/>
    </location>
</feature>
<gene>
    <name type="primary">CPK1</name>
    <name type="ordered locus">CNE00520</name>
</gene>
<organism>
    <name type="scientific">Cryptococcus neoformans var. neoformans serotype D (strain JEC21 / ATCC MYA-565)</name>
    <name type="common">Filobasidiella neoformans</name>
    <dbReference type="NCBI Taxonomy" id="214684"/>
    <lineage>
        <taxon>Eukaryota</taxon>
        <taxon>Fungi</taxon>
        <taxon>Dikarya</taxon>
        <taxon>Basidiomycota</taxon>
        <taxon>Agaricomycotina</taxon>
        <taxon>Tremellomycetes</taxon>
        <taxon>Tremellales</taxon>
        <taxon>Cryptococcaceae</taxon>
        <taxon>Cryptococcus</taxon>
        <taxon>Cryptococcus neoformans species complex</taxon>
    </lineage>
</organism>
<sequence length="366" mass="42120">MTIDQSQINFNVPSTYKLEEIVGEGAYGLVVAGTHLPSGTQVAIKRITPFDHTMFCQRTLREIKLLRHFHHENIISILDLIQPESYEVFNEVYLVQELMETDLHRVIRSQELSDDHCQYFVYQTLRGLKALHSADVLHRDLKPSNLLLNANCDLKICDFGLARSSAKPPPGTSDGGQGFMTEYVATRWYRAPEVMLSFQEYTKAIDLWSVGCILAEMINGKPLFPGRDYHHQLSLILQVLGTPTMDDFNEITSQRSKDYLRALEFTRRQDFSAICPKAKPAAVDLLKQTLTFSPSKRITVEEALMHSYVEAYHDPHDEPNAEPLKPGFFDFEFHQEKLSRDQWKRMIYDEVQDPVPTILSQWTESH</sequence>
<reference key="1">
    <citation type="journal article" date="2003" name="Mol. Microbiol.">
        <title>A MAP kinase cascade composed of cell type specific and non-specific elements controls mating and differentiation of the fungal pathogen Cryptococcus neoformans.</title>
        <authorList>
            <person name="Davidson R.C."/>
            <person name="Nichols C.B."/>
            <person name="Cox G.M."/>
            <person name="Perfect J.R."/>
            <person name="Heitman J."/>
        </authorList>
    </citation>
    <scope>NUCLEOTIDE SEQUENCE [GENOMIC DNA]</scope>
</reference>
<reference key="2">
    <citation type="journal article" date="2005" name="Science">
        <title>The genome of the basidiomycetous yeast and human pathogen Cryptococcus neoformans.</title>
        <authorList>
            <person name="Loftus B.J."/>
            <person name="Fung E."/>
            <person name="Roncaglia P."/>
            <person name="Rowley D."/>
            <person name="Amedeo P."/>
            <person name="Bruno D."/>
            <person name="Vamathevan J."/>
            <person name="Miranda M."/>
            <person name="Anderson I.J."/>
            <person name="Fraser J.A."/>
            <person name="Allen J.E."/>
            <person name="Bosdet I.E."/>
            <person name="Brent M.R."/>
            <person name="Chiu R."/>
            <person name="Doering T.L."/>
            <person name="Donlin M.J."/>
            <person name="D'Souza C.A."/>
            <person name="Fox D.S."/>
            <person name="Grinberg V."/>
            <person name="Fu J."/>
            <person name="Fukushima M."/>
            <person name="Haas B.J."/>
            <person name="Huang J.C."/>
            <person name="Janbon G."/>
            <person name="Jones S.J.M."/>
            <person name="Koo H.L."/>
            <person name="Krzywinski M.I."/>
            <person name="Kwon-Chung K.J."/>
            <person name="Lengeler K.B."/>
            <person name="Maiti R."/>
            <person name="Marra M.A."/>
            <person name="Marra R.E."/>
            <person name="Mathewson C.A."/>
            <person name="Mitchell T.G."/>
            <person name="Pertea M."/>
            <person name="Riggs F.R."/>
            <person name="Salzberg S.L."/>
            <person name="Schein J.E."/>
            <person name="Shvartsbeyn A."/>
            <person name="Shin H."/>
            <person name="Shumway M."/>
            <person name="Specht C.A."/>
            <person name="Suh B.B."/>
            <person name="Tenney A."/>
            <person name="Utterback T.R."/>
            <person name="Wickes B.L."/>
            <person name="Wortman J.R."/>
            <person name="Wye N.H."/>
            <person name="Kronstad J.W."/>
            <person name="Lodge J.K."/>
            <person name="Heitman J."/>
            <person name="Davis R.W."/>
            <person name="Fraser C.M."/>
            <person name="Hyman R.W."/>
        </authorList>
    </citation>
    <scope>NUCLEOTIDE SEQUENCE [LARGE SCALE GENOMIC DNA]</scope>
    <source>
        <strain>JEC21 / ATCC MYA-565</strain>
    </source>
</reference>
<proteinExistence type="inferred from homology"/>
<comment type="function">
    <text evidence="1">Responds to activation by environmental stress by phosphorylating downstream targets.</text>
</comment>
<comment type="catalytic activity">
    <reaction>
        <text>L-seryl-[protein] + ATP = O-phospho-L-seryl-[protein] + ADP + H(+)</text>
        <dbReference type="Rhea" id="RHEA:17989"/>
        <dbReference type="Rhea" id="RHEA-COMP:9863"/>
        <dbReference type="Rhea" id="RHEA-COMP:11604"/>
        <dbReference type="ChEBI" id="CHEBI:15378"/>
        <dbReference type="ChEBI" id="CHEBI:29999"/>
        <dbReference type="ChEBI" id="CHEBI:30616"/>
        <dbReference type="ChEBI" id="CHEBI:83421"/>
        <dbReference type="ChEBI" id="CHEBI:456216"/>
        <dbReference type="EC" id="2.7.11.24"/>
    </reaction>
</comment>
<comment type="catalytic activity">
    <reaction>
        <text>L-threonyl-[protein] + ATP = O-phospho-L-threonyl-[protein] + ADP + H(+)</text>
        <dbReference type="Rhea" id="RHEA:46608"/>
        <dbReference type="Rhea" id="RHEA-COMP:11060"/>
        <dbReference type="Rhea" id="RHEA-COMP:11605"/>
        <dbReference type="ChEBI" id="CHEBI:15378"/>
        <dbReference type="ChEBI" id="CHEBI:30013"/>
        <dbReference type="ChEBI" id="CHEBI:30616"/>
        <dbReference type="ChEBI" id="CHEBI:61977"/>
        <dbReference type="ChEBI" id="CHEBI:456216"/>
        <dbReference type="EC" id="2.7.11.24"/>
    </reaction>
</comment>
<comment type="cofactor">
    <cofactor evidence="1">
        <name>Mg(2+)</name>
        <dbReference type="ChEBI" id="CHEBI:18420"/>
    </cofactor>
</comment>
<comment type="activity regulation">
    <text evidence="1">Activated by tyrosine and threonine phosphorylation.</text>
</comment>
<comment type="domain">
    <text>The TXY motif contains the threonine and tyrosine residues whose phosphorylation activates the MAP kinases.</text>
</comment>
<comment type="PTM">
    <text evidence="1">Dually phosphorylated on Thr-181 and Tyr-183, which activates the enzyme.</text>
</comment>
<comment type="similarity">
    <text evidence="4">Belongs to the protein kinase superfamily. CMGC Ser/Thr protein kinase family. MAP kinase subfamily.</text>
</comment>